<evidence type="ECO:0000250" key="1"/>
<evidence type="ECO:0000255" key="2">
    <source>
        <dbReference type="PROSITE-ProRule" id="PRU00539"/>
    </source>
</evidence>
<evidence type="ECO:0000256" key="3">
    <source>
        <dbReference type="SAM" id="MobiDB-lite"/>
    </source>
</evidence>
<evidence type="ECO:0000305" key="4"/>
<keyword id="KW-0547">Nucleotide-binding</keyword>
<keyword id="KW-0548">Nucleotidyltransferase</keyword>
<keyword id="KW-0696">RNA-directed RNA polymerase</keyword>
<keyword id="KW-0808">Transferase</keyword>
<keyword id="KW-0693">Viral RNA replication</keyword>
<sequence>MAFPAPAFSLANLLNGTYGVDTPEEVERVRSEQREEAAAACRNYKPLPAVDVGASVTEDAHSLRTPDGAPSEEVSVEFVTYGAEDYLEKSDDELFVAFETMVKPMCIGQLWCPAFNKCSFISSIAMARALLLVPNTPNRTMKCFEDLVAAIYTKSDFYYDDECEADDVQINISSRDVPGYSFEPWSRTSGFEPPPICEACNMIMYQCPCFDFNALKKSCAERTFADDYVIEGLDGVVDNATLLSNLGPFLVPVKCQYKQYPTPTVAIPPSLNRATDRVDINLVQSICDSTLPTHSNYDDSFHQVFVESADYSIDLDHVRLRQSDLIAKIPDSGHMIPVLNTGSGHKRVGTTKEVLTAIKKRNADVPELGDSVNLPRLSKAVAERFFIAYINGNSLATSNFVNVVSNFHDYMEKWKSSGLSYDDLPDLHAENLQFYDHMIKSDVKPVVSDTLNIDRPVPATITYHKKGITSQFSPLFTALFERFQRCLRERVILPVGKISSLEMSGFDVKNKYCLEIDLSKFDKSQGEFHLMIQEHILNGLGCPAPITKWWCDFHRFSYIRDRRAGVGMPISFQRRTGDAFTYFGNTIVTMAEFAWCYDTDQFEKLLFPGDDSLGFSVLPPVGDPSKFTTLFNMEAKVMEPAVPYICSKFLLSDEFGNTFSVPDPLREVQRLGTKKIPYSDNDEFLFAHFMSFVDRLKFLDRMTQSCIDQLSLFFELKYRKSGAEAALMLGAFKKYTANFQSYKELYYSDRRQCELINSFSCVELRIERSSFIKQRKKKDGIERRRNDKRRTPTSPHGGGEETETKVSQEESTGTMLQKSQRESAFKSQTIPFPTVLSSRRFGIDRDVPPRECGGIVRV</sequence>
<organism>
    <name type="scientific">Cucumber mosaic virus (strain Ixora)</name>
    <name type="common">CMV</name>
    <dbReference type="NCBI Taxonomy" id="117114"/>
    <lineage>
        <taxon>Viruses</taxon>
        <taxon>Riboviria</taxon>
        <taxon>Orthornavirae</taxon>
        <taxon>Kitrinoviricota</taxon>
        <taxon>Alsuviricetes</taxon>
        <taxon>Martellivirales</taxon>
        <taxon>Bromoviridae</taxon>
        <taxon>Cucumovirus</taxon>
        <taxon>Cucumber mosaic virus</taxon>
    </lineage>
</organism>
<name>RDRP_CMVIX</name>
<accession>Q66117</accession>
<dbReference type="EC" id="2.7.7.48"/>
<dbReference type="EMBL" id="U20218">
    <property type="protein sequence ID" value="AAC54616.1"/>
    <property type="molecule type" value="Genomic_RNA"/>
</dbReference>
<dbReference type="PIR" id="A71392">
    <property type="entry name" value="A71392"/>
</dbReference>
<dbReference type="Proteomes" id="UP000246998">
    <property type="component" value="Genome"/>
</dbReference>
<dbReference type="GO" id="GO:0000166">
    <property type="term" value="F:nucleotide binding"/>
    <property type="evidence" value="ECO:0007669"/>
    <property type="project" value="UniProtKB-KW"/>
</dbReference>
<dbReference type="GO" id="GO:0003723">
    <property type="term" value="F:RNA binding"/>
    <property type="evidence" value="ECO:0007669"/>
    <property type="project" value="InterPro"/>
</dbReference>
<dbReference type="GO" id="GO:0003968">
    <property type="term" value="F:RNA-directed RNA polymerase activity"/>
    <property type="evidence" value="ECO:0007669"/>
    <property type="project" value="UniProtKB-KW"/>
</dbReference>
<dbReference type="GO" id="GO:0006351">
    <property type="term" value="P:DNA-templated transcription"/>
    <property type="evidence" value="ECO:0007669"/>
    <property type="project" value="InterPro"/>
</dbReference>
<dbReference type="GO" id="GO:0039690">
    <property type="term" value="P:positive stranded viral RNA replication"/>
    <property type="evidence" value="ECO:0007669"/>
    <property type="project" value="InterPro"/>
</dbReference>
<dbReference type="CDD" id="cd23252">
    <property type="entry name" value="Bromoviridae_RdRp"/>
    <property type="match status" value="1"/>
</dbReference>
<dbReference type="InterPro" id="IPR047309">
    <property type="entry name" value="Bromoviridae_RdRp"/>
</dbReference>
<dbReference type="InterPro" id="IPR043502">
    <property type="entry name" value="DNA/RNA_pol_sf"/>
</dbReference>
<dbReference type="InterPro" id="IPR001788">
    <property type="entry name" value="RNA-dep_RNA_pol_alsuvir"/>
</dbReference>
<dbReference type="InterPro" id="IPR007094">
    <property type="entry name" value="RNA-dir_pol_PSvirus"/>
</dbReference>
<dbReference type="Pfam" id="PF00978">
    <property type="entry name" value="RdRP_2"/>
    <property type="match status" value="1"/>
</dbReference>
<dbReference type="SUPFAM" id="SSF56672">
    <property type="entry name" value="DNA/RNA polymerases"/>
    <property type="match status" value="1"/>
</dbReference>
<dbReference type="PROSITE" id="PS50507">
    <property type="entry name" value="RDRP_SSRNA_POS"/>
    <property type="match status" value="1"/>
</dbReference>
<organismHost>
    <name type="scientific">Cucumis sativus</name>
    <name type="common">Cucumber</name>
    <dbReference type="NCBI Taxonomy" id="3659"/>
</organismHost>
<organismHost>
    <name type="scientific">Solanum lycopersicum</name>
    <name type="common">Tomato</name>
    <name type="synonym">Lycopersicon esculentum</name>
    <dbReference type="NCBI Taxonomy" id="4081"/>
</organismHost>
<organismHost>
    <name type="scientific">Spinacia oleracea</name>
    <name type="common">Spinach</name>
    <dbReference type="NCBI Taxonomy" id="3562"/>
</organismHost>
<proteinExistence type="inferred from homology"/>
<feature type="chain" id="PRO_0000083275" description="RNA-directed RNA polymerase 2a">
    <location>
        <begin position="1"/>
        <end position="858"/>
    </location>
</feature>
<feature type="domain" description="RdRp catalytic" evidence="2">
    <location>
        <begin position="511"/>
        <end position="624"/>
    </location>
</feature>
<feature type="region of interest" description="Disordered" evidence="3">
    <location>
        <begin position="775"/>
        <end position="830"/>
    </location>
</feature>
<feature type="compositionally biased region" description="Basic and acidic residues" evidence="3">
    <location>
        <begin position="798"/>
        <end position="808"/>
    </location>
</feature>
<feature type="compositionally biased region" description="Polar residues" evidence="3">
    <location>
        <begin position="809"/>
        <end position="818"/>
    </location>
</feature>
<comment type="function">
    <text evidence="4">RNA-dependent RNA polymerase which replicates the viral genome composed of 3 RNA segments, RNA1, RNA2 and RNA3.</text>
</comment>
<comment type="catalytic activity">
    <reaction evidence="2">
        <text>RNA(n) + a ribonucleoside 5'-triphosphate = RNA(n+1) + diphosphate</text>
        <dbReference type="Rhea" id="RHEA:21248"/>
        <dbReference type="Rhea" id="RHEA-COMP:14527"/>
        <dbReference type="Rhea" id="RHEA-COMP:17342"/>
        <dbReference type="ChEBI" id="CHEBI:33019"/>
        <dbReference type="ChEBI" id="CHEBI:61557"/>
        <dbReference type="ChEBI" id="CHEBI:140395"/>
        <dbReference type="EC" id="2.7.7.48"/>
    </reaction>
</comment>
<comment type="subunit">
    <text evidence="1">Interacts with replication protein 1a.</text>
</comment>
<comment type="similarity">
    <text evidence="4">Belongs to the ssRNA positive-strand viruses RNA-directed RNA polymerase family.</text>
</comment>
<reference key="1">
    <citation type="journal article" date="1995" name="J. Gen. Virol.">
        <title>The complete sequence of a cucumber mosaic virus from Ixora that is deficient in the replication of satellite RNAs.</title>
        <authorList>
            <person name="McGarvey P.B."/>
            <person name="Tousignant M."/>
            <person name="Geletka L."/>
            <person name="Cellini F."/>
            <person name="Kaper J.M."/>
        </authorList>
    </citation>
    <scope>NUCLEOTIDE SEQUENCE [GENOMIC RNA]</scope>
</reference>
<protein>
    <recommendedName>
        <fullName>RNA-directed RNA polymerase 2a</fullName>
        <shortName>protein 2a</shortName>
        <ecNumber>2.7.7.48</ecNumber>
    </recommendedName>
</protein>
<gene>
    <name type="ORF">ORF2a</name>
</gene>